<gene>
    <name type="primary">pufL</name>
</gene>
<comment type="function">
    <text>The reaction center is a membrane-bound complex that mediates the initial photochemical event in the electron transfer process of photosynthesis.</text>
</comment>
<comment type="subunit">
    <text>Reaction center is composed of four bacteriochlorophylls, two bacteriopheophytins, two ubiquinones, one iron, and two highly hydrophobic polypeptide chains (designated L and M).</text>
</comment>
<comment type="subcellular location">
    <subcellularLocation>
        <location evidence="1">Cell inner membrane</location>
        <topology evidence="1">Multi-pass membrane protein</topology>
    </subcellularLocation>
</comment>
<comment type="similarity">
    <text evidence="3">Belongs to the reaction center PufL/M/PsbA/D family.</text>
</comment>
<feature type="chain" id="PRO_0000090397" description="Reaction center protein L chain">
    <location>
        <begin position="1" status="less than"/>
        <end position="252"/>
    </location>
</feature>
<feature type="transmembrane region" description="Helical" evidence="2">
    <location>
        <begin position="8"/>
        <end position="30"/>
    </location>
</feature>
<feature type="transmembrane region" description="Helical" evidence="2">
    <location>
        <begin position="58"/>
        <end position="86"/>
    </location>
</feature>
<feature type="transmembrane region" description="Helical" evidence="2">
    <location>
        <begin position="91"/>
        <end position="113"/>
    </location>
</feature>
<feature type="transmembrane region" description="Helical" evidence="2">
    <location>
        <begin position="146"/>
        <end position="173"/>
    </location>
</feature>
<feature type="transmembrane region" description="Helical" evidence="2">
    <location>
        <begin position="200"/>
        <end position="225"/>
    </location>
</feature>
<feature type="binding site" description="axial binding residue" evidence="1">
    <location>
        <position position="128"/>
    </location>
    <ligand>
        <name>(7R,8Z)-bacteriochlorophyll b</name>
        <dbReference type="ChEBI" id="CHEBI:30034"/>
    </ligand>
    <ligandPart>
        <name>Mg</name>
        <dbReference type="ChEBI" id="CHEBI:25107"/>
    </ligandPart>
</feature>
<feature type="binding site" description="axial binding residue" evidence="1">
    <location>
        <position position="148"/>
    </location>
    <ligand>
        <name>(7R,8Z)-bacteriochlorophyll b</name>
        <dbReference type="ChEBI" id="CHEBI:30034"/>
    </ligand>
    <ligandPart>
        <name>Mg</name>
        <dbReference type="ChEBI" id="CHEBI:25107"/>
    </ligandPart>
</feature>
<feature type="binding site" evidence="1">
    <location>
        <position position="165"/>
    </location>
    <ligand>
        <name>Fe cation</name>
        <dbReference type="ChEBI" id="CHEBI:24875"/>
    </ligand>
</feature>
<feature type="binding site" evidence="1">
    <location>
        <position position="191"/>
    </location>
    <ligand>
        <name>a ubiquinone</name>
        <dbReference type="ChEBI" id="CHEBI:16389"/>
    </ligand>
</feature>
<feature type="binding site" evidence="1">
    <location>
        <position position="205"/>
    </location>
    <ligand>
        <name>Fe cation</name>
        <dbReference type="ChEBI" id="CHEBI:24875"/>
    </ligand>
</feature>
<feature type="non-terminal residue">
    <location>
        <position position="1"/>
    </location>
</feature>
<accession>O66137</accession>
<protein>
    <recommendedName>
        <fullName>Reaction center protein L chain</fullName>
    </recommendedName>
    <alternativeName>
        <fullName>Photosynthetic reaction center L subunit</fullName>
    </alternativeName>
</protein>
<reference key="1">
    <citation type="journal article" date="1997" name="Plant Cell Physiol.">
        <title>Nucleotide sequences of genes coding for photosynthetic reaction centers and light-harvesting proteins of Acidiphilium rubrum and related aerobic acidophilic bacteria.</title>
        <authorList>
            <person name="Nagashima K.V."/>
            <person name="Matsuura K."/>
            <person name="Wakao N."/>
            <person name="Hiraishi A."/>
            <person name="Shimada K."/>
        </authorList>
    </citation>
    <scope>NUCLEOTIDE SEQUENCE [GENOMIC DNA]</scope>
</reference>
<dbReference type="EMBL" id="AB005220">
    <property type="protein sequence ID" value="BAA25561.1"/>
    <property type="molecule type" value="Genomic_DNA"/>
</dbReference>
<dbReference type="SMR" id="O66137"/>
<dbReference type="GO" id="GO:0005886">
    <property type="term" value="C:plasma membrane"/>
    <property type="evidence" value="ECO:0007669"/>
    <property type="project" value="UniProtKB-SubCell"/>
</dbReference>
<dbReference type="GO" id="GO:0030077">
    <property type="term" value="C:plasma membrane light-harvesting complex"/>
    <property type="evidence" value="ECO:0007669"/>
    <property type="project" value="InterPro"/>
</dbReference>
<dbReference type="GO" id="GO:0042314">
    <property type="term" value="F:bacteriochlorophyll binding"/>
    <property type="evidence" value="ECO:0007669"/>
    <property type="project" value="UniProtKB-KW"/>
</dbReference>
<dbReference type="GO" id="GO:0045156">
    <property type="term" value="F:electron transporter, transferring electrons within the cyclic electron transport pathway of photosynthesis activity"/>
    <property type="evidence" value="ECO:0007669"/>
    <property type="project" value="InterPro"/>
</dbReference>
<dbReference type="GO" id="GO:0046872">
    <property type="term" value="F:metal ion binding"/>
    <property type="evidence" value="ECO:0007669"/>
    <property type="project" value="UniProtKB-KW"/>
</dbReference>
<dbReference type="GO" id="GO:0009772">
    <property type="term" value="P:photosynthetic electron transport in photosystem II"/>
    <property type="evidence" value="ECO:0007669"/>
    <property type="project" value="InterPro"/>
</dbReference>
<dbReference type="Gene3D" id="1.20.85.10">
    <property type="entry name" value="Photosystem II protein D1-like"/>
    <property type="match status" value="2"/>
</dbReference>
<dbReference type="InterPro" id="IPR036854">
    <property type="entry name" value="Photo_II_D1/D2_sf"/>
</dbReference>
<dbReference type="InterPro" id="IPR005871">
    <property type="entry name" value="Photo_RC_L"/>
</dbReference>
<dbReference type="InterPro" id="IPR000484">
    <property type="entry name" value="Photo_RC_L/M"/>
</dbReference>
<dbReference type="InterPro" id="IPR055265">
    <property type="entry name" value="Photo_RC_L/M_CS"/>
</dbReference>
<dbReference type="NCBIfam" id="TIGR01157">
    <property type="entry name" value="pufL"/>
    <property type="match status" value="1"/>
</dbReference>
<dbReference type="Pfam" id="PF00124">
    <property type="entry name" value="Photo_RC"/>
    <property type="match status" value="1"/>
</dbReference>
<dbReference type="PRINTS" id="PR00256">
    <property type="entry name" value="REACTNCENTRE"/>
</dbReference>
<dbReference type="SUPFAM" id="SSF81483">
    <property type="entry name" value="Bacterial photosystem II reaction centre, L and M subunits"/>
    <property type="match status" value="1"/>
</dbReference>
<dbReference type="PROSITE" id="PS00244">
    <property type="entry name" value="REACTION_CENTER"/>
    <property type="match status" value="1"/>
</dbReference>
<keyword id="KW-0076">Bacteriochlorophyll</keyword>
<keyword id="KW-0997">Cell inner membrane</keyword>
<keyword id="KW-1003">Cell membrane</keyword>
<keyword id="KW-0148">Chlorophyll</keyword>
<keyword id="KW-0157">Chromophore</keyword>
<keyword id="KW-0249">Electron transport</keyword>
<keyword id="KW-0408">Iron</keyword>
<keyword id="KW-0460">Magnesium</keyword>
<keyword id="KW-0472">Membrane</keyword>
<keyword id="KW-0479">Metal-binding</keyword>
<keyword id="KW-0602">Photosynthesis</keyword>
<keyword id="KW-0674">Reaction center</keyword>
<keyword id="KW-0812">Transmembrane</keyword>
<keyword id="KW-1133">Transmembrane helix</keyword>
<keyword id="KW-0813">Transport</keyword>
<evidence type="ECO:0000250" key="1"/>
<evidence type="ECO:0000255" key="2"/>
<evidence type="ECO:0000305" key="3"/>
<proteinExistence type="inferred from homology"/>
<name>RCEL_ACICY</name>
<organism>
    <name type="scientific">Acidiphilium cryptum</name>
    <dbReference type="NCBI Taxonomy" id="524"/>
    <lineage>
        <taxon>Bacteria</taxon>
        <taxon>Pseudomonadati</taxon>
        <taxon>Pseudomonadota</taxon>
        <taxon>Alphaproteobacteria</taxon>
        <taxon>Acetobacterales</taxon>
        <taxon>Acidocellaceae</taxon>
        <taxon>Acidiphilium</taxon>
    </lineage>
</organism>
<sequence length="252" mass="27456">VGPFYVGFFGVTAAFFIMLGTALIIWGAALGPTWNIWQISIAPPDLSYGLGLAPLAKGGLWQIITVCAIGAFGSWALREVEISRKLGIGLHVPAAFSVAIFAYVTLEVIRPLLMGAWGNGFPYGIMSHLDWVSNTGYAYLNFEYNPMHMVAVTLFFTTTLALALHGSLVLAAINPPAGETVKFAEHEDTFFRDFIGYSIGTLGIHRLGLFLALGAGFASATCILLSGPFWTQGWPSWWGWWLHLPIWQFGGH</sequence>